<gene>
    <name evidence="2" type="primary">hppA</name>
    <name type="ordered locus">BT_3411</name>
</gene>
<proteinExistence type="inferred from homology"/>
<protein>
    <recommendedName>
        <fullName evidence="2">Putative K(+)-stimulated pyrophosphate-energized sodium pump</fullName>
        <ecNumber evidence="2">7.2.3.1</ecNumber>
    </recommendedName>
    <alternativeName>
        <fullName evidence="2">Membrane-bound sodium-translocating pyrophosphatase</fullName>
    </alternativeName>
    <alternativeName>
        <fullName evidence="2">Pyrophosphate-energized inorganic pyrophosphatase</fullName>
        <shortName evidence="2">Na(+)-PPase</shortName>
    </alternativeName>
</protein>
<reference key="1">
    <citation type="journal article" date="2003" name="Science">
        <title>A genomic view of the human-Bacteroides thetaiotaomicron symbiosis.</title>
        <authorList>
            <person name="Xu J."/>
            <person name="Bjursell M.K."/>
            <person name="Himrod J."/>
            <person name="Deng S."/>
            <person name="Carmichael L.K."/>
            <person name="Chiang H.C."/>
            <person name="Hooper L.V."/>
            <person name="Gordon J.I."/>
        </authorList>
    </citation>
    <scope>NUCLEOTIDE SEQUENCE [LARGE SCALE GENOMIC DNA]</scope>
    <source>
        <strain>ATCC 29148 / DSM 2079 / JCM 5827 / CCUG 10774 / NCTC 10582 / VPI-5482 / E50</strain>
    </source>
</reference>
<keyword id="KW-0106">Calcium</keyword>
<keyword id="KW-0997">Cell inner membrane</keyword>
<keyword id="KW-1003">Cell membrane</keyword>
<keyword id="KW-0406">Ion transport</keyword>
<keyword id="KW-0460">Magnesium</keyword>
<keyword id="KW-0472">Membrane</keyword>
<keyword id="KW-0479">Metal-binding</keyword>
<keyword id="KW-0630">Potassium</keyword>
<keyword id="KW-1185">Reference proteome</keyword>
<keyword id="KW-0915">Sodium</keyword>
<keyword id="KW-0739">Sodium transport</keyword>
<keyword id="KW-1278">Translocase</keyword>
<keyword id="KW-0812">Transmembrane</keyword>
<keyword id="KW-1133">Transmembrane helix</keyword>
<keyword id="KW-0813">Transport</keyword>
<sequence length="734" mass="76538">MDSILFWLVPVASVLALCFAYYFHKQMMKESEGTPQMIKIAAAVRKGAMSYLKQQYKIVGCVFLGLVILFSIMAYGFHVQNVWVPIAFLTGGFFSGLSGFLGMKTATYASARTANAARNSLNSGLRIAFRSGAVMGLVVVGLGLLDISFWYLLLNAVIPADALTPTHKLCVITTTMLTFGMGASTQALFARVGGGIYTKAADVGADLVGKVEAGIPEDDPRNPATIADNVGDNVGDVAGMGADLYESYCGSILATAALGAAAFIHSADTVMQFKAVIAPMLIAAVGILLSIIGIFSVRTKENATVKDLLGSLAFGTNLSSVLIVAATFLILWLLQLDNWIWISCAVVVGLLVGIVIGRSTEYYTSQSYRPTQKLSESGKTGPATVIISGIGLGMLSTAIPVIAVVVGIIASFLLASGFDFSNVGMGLYGIGIAAVGMLSTLGITLATDAYGPIADNAGGNAEMAGLGAEVRKRTDALDSLGNTTAATGKGFAIGSAALTGLALLASYIEEIRIGLTRLGTVDLSMPNGDVVSTANATFVDFMNYYDVTLMNPKVLSGMFLGSMMAFLFCGLTMNAVGRAAGHMVDEVRRQFREIKGILTGEAEPDYERCVAISTKGAQREMVIPSLIAILAPIATGLIFGVTGVLGLLIGGLSTGFVLAIFMANAGGAWDNAKKYVEEGNFGGKGGEVHKATVVGDTVGDPFKDTSGPSLNILIKLMSMVAIVMAGLTVAWSLF</sequence>
<name>HPPA_BACTN</name>
<comment type="function">
    <text evidence="2">Sodium pump that utilizes the energy of pyrophosphate hydrolysis as the driving force for Na(+) movement across the membrane.</text>
</comment>
<comment type="catalytic activity">
    <reaction evidence="2">
        <text>Na(+)(in) + diphosphate + H2O = Na(+)(out) + 2 phosphate + H(+)</text>
        <dbReference type="Rhea" id="RHEA:57884"/>
        <dbReference type="ChEBI" id="CHEBI:15377"/>
        <dbReference type="ChEBI" id="CHEBI:15378"/>
        <dbReference type="ChEBI" id="CHEBI:29101"/>
        <dbReference type="ChEBI" id="CHEBI:33019"/>
        <dbReference type="ChEBI" id="CHEBI:43474"/>
        <dbReference type="EC" id="7.2.3.1"/>
    </reaction>
</comment>
<comment type="cofactor">
    <cofactor evidence="2">
        <name>Mg(2+)</name>
        <dbReference type="ChEBI" id="CHEBI:18420"/>
    </cofactor>
</comment>
<comment type="activity regulation">
    <text evidence="2">Requires K(+) for maximal activity.</text>
</comment>
<comment type="subunit">
    <text evidence="2">Homodimer.</text>
</comment>
<comment type="subcellular location">
    <subcellularLocation>
        <location evidence="2">Cell inner membrane</location>
        <topology evidence="2">Multi-pass membrane protein</topology>
    </subcellularLocation>
</comment>
<comment type="similarity">
    <text evidence="2">Belongs to the H(+)-translocating pyrophosphatase (TC 3.A.10) family. K(+)-stimulated subfamily.</text>
</comment>
<organism>
    <name type="scientific">Bacteroides thetaiotaomicron (strain ATCC 29148 / DSM 2079 / JCM 5827 / CCUG 10774 / NCTC 10582 / VPI-5482 / E50)</name>
    <dbReference type="NCBI Taxonomy" id="226186"/>
    <lineage>
        <taxon>Bacteria</taxon>
        <taxon>Pseudomonadati</taxon>
        <taxon>Bacteroidota</taxon>
        <taxon>Bacteroidia</taxon>
        <taxon>Bacteroidales</taxon>
        <taxon>Bacteroidaceae</taxon>
        <taxon>Bacteroides</taxon>
    </lineage>
</organism>
<evidence type="ECO:0000250" key="1"/>
<evidence type="ECO:0000255" key="2">
    <source>
        <dbReference type="HAMAP-Rule" id="MF_01129"/>
    </source>
</evidence>
<dbReference type="EC" id="7.2.3.1" evidence="2"/>
<dbReference type="EMBL" id="AE015928">
    <property type="protein sequence ID" value="AAO78517.1"/>
    <property type="molecule type" value="Genomic_DNA"/>
</dbReference>
<dbReference type="RefSeq" id="NP_812323.1">
    <property type="nucleotide sequence ID" value="NC_004663.1"/>
</dbReference>
<dbReference type="RefSeq" id="WP_008767612.1">
    <property type="nucleotide sequence ID" value="NC_004663.1"/>
</dbReference>
<dbReference type="SMR" id="Q8A294"/>
<dbReference type="PaxDb" id="226186-BT_3411"/>
<dbReference type="EnsemblBacteria" id="AAO78517">
    <property type="protein sequence ID" value="AAO78517"/>
    <property type="gene ID" value="BT_3411"/>
</dbReference>
<dbReference type="GeneID" id="60924591"/>
<dbReference type="KEGG" id="bth:BT_3411"/>
<dbReference type="PATRIC" id="fig|226186.12.peg.3480"/>
<dbReference type="eggNOG" id="COG3808">
    <property type="taxonomic scope" value="Bacteria"/>
</dbReference>
<dbReference type="HOGENOM" id="CLU_008743_3_1_10"/>
<dbReference type="InParanoid" id="Q8A294"/>
<dbReference type="OrthoDB" id="9808652at2"/>
<dbReference type="Proteomes" id="UP000001414">
    <property type="component" value="Chromosome"/>
</dbReference>
<dbReference type="GO" id="GO:0005886">
    <property type="term" value="C:plasma membrane"/>
    <property type="evidence" value="ECO:0007669"/>
    <property type="project" value="UniProtKB-SubCell"/>
</dbReference>
<dbReference type="GO" id="GO:0009678">
    <property type="term" value="F:diphosphate hydrolysis-driven proton transmembrane transporter activity"/>
    <property type="evidence" value="ECO:0007669"/>
    <property type="project" value="UniProtKB-UniRule"/>
</dbReference>
<dbReference type="GO" id="GO:0004427">
    <property type="term" value="F:inorganic diphosphate phosphatase activity"/>
    <property type="evidence" value="ECO:0007669"/>
    <property type="project" value="UniProtKB-UniRule"/>
</dbReference>
<dbReference type="GO" id="GO:0000287">
    <property type="term" value="F:magnesium ion binding"/>
    <property type="evidence" value="ECO:0007669"/>
    <property type="project" value="UniProtKB-UniRule"/>
</dbReference>
<dbReference type="GO" id="GO:0030955">
    <property type="term" value="F:potassium ion binding"/>
    <property type="evidence" value="ECO:0007669"/>
    <property type="project" value="UniProtKB-UniRule"/>
</dbReference>
<dbReference type="GO" id="GO:0006814">
    <property type="term" value="P:sodium ion transport"/>
    <property type="evidence" value="ECO:0007669"/>
    <property type="project" value="UniProtKB-UniRule"/>
</dbReference>
<dbReference type="HAMAP" id="MF_01129">
    <property type="entry name" value="PPase_energized_pump"/>
    <property type="match status" value="1"/>
</dbReference>
<dbReference type="InterPro" id="IPR004131">
    <property type="entry name" value="PPase-energised_H-pump"/>
</dbReference>
<dbReference type="NCBIfam" id="NF001954">
    <property type="entry name" value="PRK00733.2-2"/>
    <property type="match status" value="1"/>
</dbReference>
<dbReference type="NCBIfam" id="NF001960">
    <property type="entry name" value="PRK00733.3-5"/>
    <property type="match status" value="1"/>
</dbReference>
<dbReference type="NCBIfam" id="TIGR01104">
    <property type="entry name" value="V_PPase"/>
    <property type="match status" value="1"/>
</dbReference>
<dbReference type="PANTHER" id="PTHR31998">
    <property type="entry name" value="K(+)-INSENSITIVE PYROPHOSPHATE-ENERGIZED PROTON PUMP"/>
    <property type="match status" value="1"/>
</dbReference>
<dbReference type="Pfam" id="PF03030">
    <property type="entry name" value="H_PPase"/>
    <property type="match status" value="1"/>
</dbReference>
<dbReference type="PIRSF" id="PIRSF001265">
    <property type="entry name" value="H+-PPase"/>
    <property type="match status" value="1"/>
</dbReference>
<feature type="chain" id="PRO_0000217001" description="Putative K(+)-stimulated pyrophosphate-energized sodium pump">
    <location>
        <begin position="1"/>
        <end position="734"/>
    </location>
</feature>
<feature type="transmembrane region" description="Helical" evidence="2">
    <location>
        <begin position="3"/>
        <end position="23"/>
    </location>
</feature>
<feature type="transmembrane region" description="Helical" evidence="2">
    <location>
        <begin position="58"/>
        <end position="78"/>
    </location>
</feature>
<feature type="transmembrane region" description="Helical" evidence="2">
    <location>
        <begin position="82"/>
        <end position="102"/>
    </location>
</feature>
<feature type="transmembrane region" description="Helical" evidence="2">
    <location>
        <begin position="134"/>
        <end position="154"/>
    </location>
</feature>
<feature type="transmembrane region" description="Helical" evidence="2">
    <location>
        <begin position="169"/>
        <end position="189"/>
    </location>
</feature>
<feature type="transmembrane region" description="Helical" evidence="2">
    <location>
        <begin position="244"/>
        <end position="264"/>
    </location>
</feature>
<feature type="transmembrane region" description="Helical" evidence="2">
    <location>
        <begin position="275"/>
        <end position="295"/>
    </location>
</feature>
<feature type="transmembrane region" description="Helical" evidence="2">
    <location>
        <begin position="314"/>
        <end position="334"/>
    </location>
</feature>
<feature type="transmembrane region" description="Helical" evidence="2">
    <location>
        <begin position="336"/>
        <end position="356"/>
    </location>
</feature>
<feature type="transmembrane region" description="Helical" evidence="2">
    <location>
        <begin position="377"/>
        <end position="397"/>
    </location>
</feature>
<feature type="transmembrane region" description="Helical" evidence="2">
    <location>
        <begin position="398"/>
        <end position="418"/>
    </location>
</feature>
<feature type="transmembrane region" description="Helical" evidence="2">
    <location>
        <begin position="423"/>
        <end position="443"/>
    </location>
</feature>
<feature type="transmembrane region" description="Helical" evidence="2">
    <location>
        <begin position="491"/>
        <end position="511"/>
    </location>
</feature>
<feature type="transmembrane region" description="Helical" evidence="2">
    <location>
        <begin position="557"/>
        <end position="577"/>
    </location>
</feature>
<feature type="transmembrane region" description="Helical" evidence="2">
    <location>
        <begin position="629"/>
        <end position="649"/>
    </location>
</feature>
<feature type="transmembrane region" description="Helical" evidence="2">
    <location>
        <begin position="650"/>
        <end position="670"/>
    </location>
</feature>
<feature type="transmembrane region" description="Helical" evidence="2">
    <location>
        <begin position="712"/>
        <end position="732"/>
    </location>
</feature>
<feature type="binding site" evidence="1">
    <location>
        <position position="199"/>
    </location>
    <ligand>
        <name>substrate</name>
    </ligand>
</feature>
<feature type="binding site" evidence="1">
    <location>
        <position position="202"/>
    </location>
    <ligand>
        <name>Mg(2+)</name>
        <dbReference type="ChEBI" id="CHEBI:18420"/>
        <label>1</label>
    </ligand>
</feature>
<feature type="binding site" evidence="1">
    <location>
        <position position="206"/>
    </location>
    <ligand>
        <name>Mg(2+)</name>
        <dbReference type="ChEBI" id="CHEBI:18420"/>
        <label>1</label>
    </ligand>
</feature>
<feature type="binding site" evidence="1">
    <location>
        <position position="229"/>
    </location>
    <ligand>
        <name>Mg(2+)</name>
        <dbReference type="ChEBI" id="CHEBI:18420"/>
        <label>2</label>
    </ligand>
</feature>
<feature type="binding site" evidence="1">
    <location>
        <position position="232"/>
    </location>
    <ligand>
        <name>Mg(2+)</name>
        <dbReference type="ChEBI" id="CHEBI:18420"/>
        <label>2</label>
    </ligand>
</feature>
<feature type="binding site" evidence="1">
    <location>
        <position position="455"/>
    </location>
    <ligand>
        <name>Mg(2+)</name>
        <dbReference type="ChEBI" id="CHEBI:18420"/>
        <label>2</label>
    </ligand>
</feature>
<feature type="binding site" evidence="1">
    <location>
        <position position="670"/>
    </location>
    <ligand>
        <name>Ca(2+)</name>
        <dbReference type="ChEBI" id="CHEBI:29108"/>
    </ligand>
</feature>
<feature type="binding site" evidence="1">
    <location>
        <position position="696"/>
    </location>
    <ligand>
        <name>Ca(2+)</name>
        <dbReference type="ChEBI" id="CHEBI:29108"/>
    </ligand>
</feature>
<feature type="binding site" evidence="1">
    <location>
        <position position="700"/>
    </location>
    <ligand>
        <name>Ca(2+)</name>
        <dbReference type="ChEBI" id="CHEBI:29108"/>
    </ligand>
</feature>
<feature type="binding site" evidence="1">
    <location>
        <position position="703"/>
    </location>
    <ligand>
        <name>substrate</name>
    </ligand>
</feature>
<feature type="site" description="Important for ion transport" evidence="1">
    <location>
        <position position="191"/>
    </location>
</feature>
<feature type="site" description="Important for ion transport" evidence="1">
    <location>
        <position position="236"/>
    </location>
</feature>
<feature type="site" description="Important for ion transport" evidence="1">
    <location>
        <position position="243"/>
    </location>
</feature>
<feature type="site" description="Determinant of potassium dependence" evidence="2">
    <location>
        <position position="485"/>
    </location>
</feature>
<feature type="site" description="Important for ion transport" evidence="1">
    <location>
        <position position="704"/>
    </location>
</feature>
<feature type="site" description="Important for ion transport" evidence="1">
    <location>
        <position position="715"/>
    </location>
</feature>
<accession>Q8A294</accession>